<proteinExistence type="evidence at protein level"/>
<sequence>MSSYFVNSTFPVTLASGQESFLGQLPLYSSGYADPLRHYPAPYGPGPGQDKGFAASSYYPPAGGGYGRAAPCDYGPAPAFYREKDAACALSGADEPPPFHPEPRKSDCAQDKSVFGETEEQKCSTPVYPWMQRMNSCNSSSFGPSGRRGRQTYTRYQTLELEKEFHYNRYLTRRRRIEIAHALCLTERQIKIWFQNRRMKWKKESKLLSASQLSAEEEEEKPAE</sequence>
<feature type="chain" id="PRO_0000200136" description="Homeobox protein Hox-B6">
    <location>
        <begin position="1"/>
        <end position="224"/>
    </location>
</feature>
<feature type="DNA-binding region" description="Homeobox" evidence="1">
    <location>
        <begin position="146"/>
        <end position="205"/>
    </location>
</feature>
<feature type="short sequence motif" description="Antp-type hexapeptide">
    <location>
        <begin position="127"/>
        <end position="132"/>
    </location>
</feature>
<feature type="modified residue" description="Phosphoserine" evidence="3">
    <location>
        <position position="214"/>
    </location>
</feature>
<feature type="sequence conflict" description="In Ref. 4; AAA37844." evidence="2" ref="4">
    <original>T</original>
    <variation>P</variation>
    <location>
        <position position="186"/>
    </location>
</feature>
<organism>
    <name type="scientific">Mus musculus</name>
    <name type="common">Mouse</name>
    <dbReference type="NCBI Taxonomy" id="10090"/>
    <lineage>
        <taxon>Eukaryota</taxon>
        <taxon>Metazoa</taxon>
        <taxon>Chordata</taxon>
        <taxon>Craniata</taxon>
        <taxon>Vertebrata</taxon>
        <taxon>Euteleostomi</taxon>
        <taxon>Mammalia</taxon>
        <taxon>Eutheria</taxon>
        <taxon>Euarchontoglires</taxon>
        <taxon>Glires</taxon>
        <taxon>Rodentia</taxon>
        <taxon>Myomorpha</taxon>
        <taxon>Muroidea</taxon>
        <taxon>Muridae</taxon>
        <taxon>Murinae</taxon>
        <taxon>Mus</taxon>
        <taxon>Mus</taxon>
    </lineage>
</organism>
<protein>
    <recommendedName>
        <fullName>Homeobox protein Hox-B6</fullName>
    </recommendedName>
    <alternativeName>
        <fullName>Homeobox protein Hox-2.2</fullName>
    </alternativeName>
    <alternativeName>
        <fullName>Homeobox protein MH-22A</fullName>
    </alternativeName>
</protein>
<accession>P09023</accession>
<name>HXB6_MOUSE</name>
<evidence type="ECO:0000255" key="1">
    <source>
        <dbReference type="PROSITE-ProRule" id="PRU00108"/>
    </source>
</evidence>
<evidence type="ECO:0000305" key="2"/>
<evidence type="ECO:0007744" key="3">
    <source>
    </source>
</evidence>
<keyword id="KW-0217">Developmental protein</keyword>
<keyword id="KW-0238">DNA-binding</keyword>
<keyword id="KW-0371">Homeobox</keyword>
<keyword id="KW-0539">Nucleus</keyword>
<keyword id="KW-0597">Phosphoprotein</keyword>
<keyword id="KW-1185">Reference proteome</keyword>
<keyword id="KW-0804">Transcription</keyword>
<keyword id="KW-0805">Transcription regulation</keyword>
<dbReference type="EMBL" id="M18166">
    <property type="protein sequence ID" value="AAA37844.1"/>
    <property type="molecule type" value="Genomic_DNA"/>
</dbReference>
<dbReference type="EMBL" id="X56459">
    <property type="protein sequence ID" value="CAA39834.1"/>
    <property type="molecule type" value="mRNA"/>
</dbReference>
<dbReference type="EMBL" id="BC016893">
    <property type="protein sequence ID" value="AAH16893.1"/>
    <property type="molecule type" value="mRNA"/>
</dbReference>
<dbReference type="EMBL" id="M18401">
    <property type="protein sequence ID" value="AAC27130.1"/>
    <property type="status" value="ALT_SEQ"/>
    <property type="molecule type" value="Genomic_DNA"/>
</dbReference>
<dbReference type="EMBL" id="J03782">
    <property type="protein sequence ID" value="AAA37843.1"/>
    <property type="molecule type" value="Genomic_DNA"/>
</dbReference>
<dbReference type="CCDS" id="CCDS25295.1"/>
<dbReference type="PIR" id="A31324">
    <property type="entry name" value="A31324"/>
</dbReference>
<dbReference type="PIR" id="B29585">
    <property type="entry name" value="B29585"/>
</dbReference>
<dbReference type="PIR" id="C27176">
    <property type="entry name" value="C27176"/>
</dbReference>
<dbReference type="RefSeq" id="NP_032295.1">
    <property type="nucleotide sequence ID" value="NM_008269.2"/>
</dbReference>
<dbReference type="SMR" id="P09023"/>
<dbReference type="BioGRID" id="200380">
    <property type="interactions" value="1"/>
</dbReference>
<dbReference type="DIP" id="DIP-59870N"/>
<dbReference type="FunCoup" id="P09023">
    <property type="interactions" value="995"/>
</dbReference>
<dbReference type="IntAct" id="P09023">
    <property type="interactions" value="1"/>
</dbReference>
<dbReference type="STRING" id="10090.ENSMUSP00000133281"/>
<dbReference type="iPTMnet" id="P09023"/>
<dbReference type="PhosphoSitePlus" id="P09023"/>
<dbReference type="jPOST" id="P09023"/>
<dbReference type="PaxDb" id="10090-ENSMUSP00000133281"/>
<dbReference type="PeptideAtlas" id="P09023"/>
<dbReference type="ProteomicsDB" id="273059"/>
<dbReference type="Pumba" id="P09023"/>
<dbReference type="Antibodypedia" id="17852">
    <property type="antibodies" value="159 antibodies from 22 providers"/>
</dbReference>
<dbReference type="DNASU" id="15414"/>
<dbReference type="Ensembl" id="ENSMUST00000000704.6">
    <property type="protein sequence ID" value="ENSMUSP00000000704.4"/>
    <property type="gene ID" value="ENSMUSG00000000690.6"/>
</dbReference>
<dbReference type="Ensembl" id="ENSMUST00000173432.3">
    <property type="protein sequence ID" value="ENSMUSP00000133281.2"/>
    <property type="gene ID" value="ENSMUSG00000000690.6"/>
</dbReference>
<dbReference type="GeneID" id="15414"/>
<dbReference type="KEGG" id="mmu:15414"/>
<dbReference type="UCSC" id="uc007lbt.1">
    <property type="organism name" value="mouse"/>
</dbReference>
<dbReference type="AGR" id="MGI:96187"/>
<dbReference type="CTD" id="3216"/>
<dbReference type="MGI" id="MGI:96187">
    <property type="gene designation" value="Hoxb6"/>
</dbReference>
<dbReference type="VEuPathDB" id="HostDB:ENSMUSG00000000690"/>
<dbReference type="eggNOG" id="KOG0489">
    <property type="taxonomic scope" value="Eukaryota"/>
</dbReference>
<dbReference type="GeneTree" id="ENSGT00940000161108"/>
<dbReference type="HOGENOM" id="CLU_061398_1_1_1"/>
<dbReference type="InParanoid" id="P09023"/>
<dbReference type="OMA" id="CAQDKNV"/>
<dbReference type="OrthoDB" id="6159439at2759"/>
<dbReference type="PhylomeDB" id="P09023"/>
<dbReference type="TreeFam" id="TF316310"/>
<dbReference type="BioGRID-ORCS" id="15414">
    <property type="hits" value="4 hits in 76 CRISPR screens"/>
</dbReference>
<dbReference type="ChiTaRS" id="Hoxb6">
    <property type="organism name" value="mouse"/>
</dbReference>
<dbReference type="PRO" id="PR:P09023"/>
<dbReference type="Proteomes" id="UP000000589">
    <property type="component" value="Chromosome 11"/>
</dbReference>
<dbReference type="RNAct" id="P09023">
    <property type="molecule type" value="protein"/>
</dbReference>
<dbReference type="Bgee" id="ENSMUSG00000000690">
    <property type="expression patterns" value="Expressed in thoracic region of vertebral column and 125 other cell types or tissues"/>
</dbReference>
<dbReference type="GO" id="GO:0005634">
    <property type="term" value="C:nucleus"/>
    <property type="evidence" value="ECO:0007669"/>
    <property type="project" value="UniProtKB-SubCell"/>
</dbReference>
<dbReference type="GO" id="GO:0000981">
    <property type="term" value="F:DNA-binding transcription factor activity, RNA polymerase II-specific"/>
    <property type="evidence" value="ECO:0007669"/>
    <property type="project" value="InterPro"/>
</dbReference>
<dbReference type="GO" id="GO:1990837">
    <property type="term" value="F:sequence-specific double-stranded DNA binding"/>
    <property type="evidence" value="ECO:0007669"/>
    <property type="project" value="Ensembl"/>
</dbReference>
<dbReference type="GO" id="GO:0009952">
    <property type="term" value="P:anterior/posterior pattern specification"/>
    <property type="evidence" value="ECO:0000315"/>
    <property type="project" value="MGI"/>
</dbReference>
<dbReference type="GO" id="GO:0048706">
    <property type="term" value="P:embryonic skeletal system development"/>
    <property type="evidence" value="ECO:0000315"/>
    <property type="project" value="MGI"/>
</dbReference>
<dbReference type="GO" id="GO:0048704">
    <property type="term" value="P:embryonic skeletal system morphogenesis"/>
    <property type="evidence" value="ECO:0000316"/>
    <property type="project" value="MGI"/>
</dbReference>
<dbReference type="GO" id="GO:0034101">
    <property type="term" value="P:erythrocyte homeostasis"/>
    <property type="evidence" value="ECO:0000315"/>
    <property type="project" value="MGI"/>
</dbReference>
<dbReference type="CDD" id="cd00086">
    <property type="entry name" value="homeodomain"/>
    <property type="match status" value="1"/>
</dbReference>
<dbReference type="FunFam" id="1.10.10.60:FF:000017">
    <property type="entry name" value="Homeobox protein antennapedia"/>
    <property type="match status" value="1"/>
</dbReference>
<dbReference type="Gene3D" id="1.10.10.60">
    <property type="entry name" value="Homeodomain-like"/>
    <property type="match status" value="1"/>
</dbReference>
<dbReference type="InterPro" id="IPR050296">
    <property type="entry name" value="Antp_homeobox"/>
</dbReference>
<dbReference type="InterPro" id="IPR001356">
    <property type="entry name" value="HD"/>
</dbReference>
<dbReference type="InterPro" id="IPR020479">
    <property type="entry name" value="HD_metazoa"/>
</dbReference>
<dbReference type="InterPro" id="IPR017995">
    <property type="entry name" value="Homeobox_antennapedia"/>
</dbReference>
<dbReference type="InterPro" id="IPR001827">
    <property type="entry name" value="Homeobox_Antennapedia_CS"/>
</dbReference>
<dbReference type="InterPro" id="IPR017970">
    <property type="entry name" value="Homeobox_CS"/>
</dbReference>
<dbReference type="InterPro" id="IPR009057">
    <property type="entry name" value="Homeodomain-like_sf"/>
</dbReference>
<dbReference type="PANTHER" id="PTHR45659">
    <property type="entry name" value="HOMEOBOX PROTEIN HOX"/>
    <property type="match status" value="1"/>
</dbReference>
<dbReference type="PANTHER" id="PTHR45659:SF9">
    <property type="entry name" value="HOMEOBOX PROTEIN HOX-B6"/>
    <property type="match status" value="1"/>
</dbReference>
<dbReference type="Pfam" id="PF00046">
    <property type="entry name" value="Homeodomain"/>
    <property type="match status" value="1"/>
</dbReference>
<dbReference type="PRINTS" id="PR00025">
    <property type="entry name" value="ANTENNAPEDIA"/>
</dbReference>
<dbReference type="PRINTS" id="PR00024">
    <property type="entry name" value="HOMEOBOX"/>
</dbReference>
<dbReference type="SMART" id="SM00389">
    <property type="entry name" value="HOX"/>
    <property type="match status" value="1"/>
</dbReference>
<dbReference type="SUPFAM" id="SSF46689">
    <property type="entry name" value="Homeodomain-like"/>
    <property type="match status" value="1"/>
</dbReference>
<dbReference type="PROSITE" id="PS00032">
    <property type="entry name" value="ANTENNAPEDIA"/>
    <property type="match status" value="1"/>
</dbReference>
<dbReference type="PROSITE" id="PS00027">
    <property type="entry name" value="HOMEOBOX_1"/>
    <property type="match status" value="1"/>
</dbReference>
<dbReference type="PROSITE" id="PS50071">
    <property type="entry name" value="HOMEOBOX_2"/>
    <property type="match status" value="1"/>
</dbReference>
<comment type="function">
    <text>Sequence-specific transcription factor which is part of a developmental regulatory system that provides cells with specific positional identities on the anterior-posterior axis.</text>
</comment>
<comment type="interaction">
    <interactant intactId="EBI-15992861">
        <id>P09023</id>
    </interactant>
    <interactant intactId="EBI-6996259">
        <id>P41778</id>
        <label>Pbx1</label>
    </interactant>
    <organismsDiffer>false</organismsDiffer>
    <experiments>2</experiments>
</comment>
<comment type="subcellular location">
    <subcellularLocation>
        <location>Nucleus</location>
    </subcellularLocation>
</comment>
<comment type="similarity">
    <text evidence="2">Belongs to the Antp homeobox family.</text>
</comment>
<gene>
    <name type="primary">Hoxb6</name>
    <name type="synonym">Hox-2.2</name>
    <name type="synonym">Hoxb-6</name>
</gene>
<reference key="1">
    <citation type="journal article" date="1988" name="Proc. Natl. Acad. Sci. U.S.A.">
        <title>Structure and expression of Hox-2.2, a murine homeobox-containing gene.</title>
        <authorList>
            <person name="Schughart K."/>
            <person name="Utset M.F."/>
            <person name="Awgulewitsch A."/>
            <person name="Ruddle F.H."/>
        </authorList>
    </citation>
    <scope>NUCLEOTIDE SEQUENCE [GENOMIC DNA]</scope>
</reference>
<reference key="2">
    <citation type="journal article" date="1991" name="Nucleic Acids Res.">
        <title>Alternative splicing of the HOX 2.2 homeobox gene in human hematopoietic cells and murine embryonic and adult tissues.</title>
        <authorList>
            <person name="Shen W.-F."/>
            <person name="Detmer K."/>
            <person name="Simonitch-Eason T.A."/>
            <person name="Lawrence H.J."/>
            <person name="Largman C."/>
        </authorList>
    </citation>
    <scope>NUCLEOTIDE SEQUENCE [MRNA]</scope>
</reference>
<reference key="3">
    <citation type="journal article" date="2004" name="Genome Res.">
        <title>The status, quality, and expansion of the NIH full-length cDNA project: the Mammalian Gene Collection (MGC).</title>
        <authorList>
            <consortium name="The MGC Project Team"/>
        </authorList>
    </citation>
    <scope>NUCLEOTIDE SEQUENCE [LARGE SCALE MRNA]</scope>
    <source>
        <strain>FVB/N</strain>
        <tissue>Kidney</tissue>
    </source>
</reference>
<reference key="4">
    <citation type="journal article" date="1987" name="DNA">
        <title>New murine homeoboxes: structure, chromosomal assignment, and differential expression in adult erythropoiesis.</title>
        <authorList>
            <person name="Lonai P."/>
            <person name="Arman E."/>
            <person name="Czosnek H."/>
            <person name="Ruddle F.H."/>
            <person name="Blatt C."/>
        </authorList>
    </citation>
    <scope>NUCLEOTIDE SEQUENCE [GENOMIC DNA] OF 144-224</scope>
</reference>
<reference key="5">
    <citation type="journal article" date="1987" name="Genomics">
        <title>Sequence analysis of the murine Hox-2.2, -2.3, and -2.4 homeo boxes: evolutionary and structural comparisons.</title>
        <authorList>
            <person name="Hart C.P."/>
            <person name="Fainsod A."/>
            <person name="Ruddle F.H."/>
        </authorList>
    </citation>
    <scope>NUCLEOTIDE SEQUENCE OF 140-224</scope>
</reference>
<reference key="6">
    <citation type="journal article" date="2010" name="Cell">
        <title>A tissue-specific atlas of mouse protein phosphorylation and expression.</title>
        <authorList>
            <person name="Huttlin E.L."/>
            <person name="Jedrychowski M.P."/>
            <person name="Elias J.E."/>
            <person name="Goswami T."/>
            <person name="Rad R."/>
            <person name="Beausoleil S.A."/>
            <person name="Villen J."/>
            <person name="Haas W."/>
            <person name="Sowa M.E."/>
            <person name="Gygi S.P."/>
        </authorList>
    </citation>
    <scope>PHOSPHORYLATION [LARGE SCALE ANALYSIS] AT SER-214</scope>
    <scope>IDENTIFICATION BY MASS SPECTROMETRY [LARGE SCALE ANALYSIS]</scope>
    <source>
        <tissue>Kidney</tissue>
    </source>
</reference>